<organismHost>
    <name type="scientific">Homo sapiens</name>
    <name type="common">Human</name>
    <dbReference type="NCBI Taxonomy" id="9606"/>
</organismHost>
<feature type="chain" id="PRO_0000190499" description="Ribonucleoside-diphosphate reductase small chain">
    <location>
        <begin position="1"/>
        <end position="319"/>
    </location>
</feature>
<feature type="region of interest" description="Interaction with R1" evidence="2">
    <location>
        <begin position="313"/>
        <end position="319"/>
    </location>
</feature>
<feature type="active site" evidence="3">
    <location>
        <position position="108"/>
    </location>
</feature>
<feature type="binding site" evidence="3">
    <location>
        <position position="70"/>
    </location>
    <ligand>
        <name>Fe cation</name>
        <dbReference type="ChEBI" id="CHEBI:24875"/>
        <label>1</label>
    </ligand>
</feature>
<feature type="binding site" evidence="3">
    <location>
        <position position="101"/>
    </location>
    <ligand>
        <name>Fe cation</name>
        <dbReference type="ChEBI" id="CHEBI:24875"/>
        <label>1</label>
    </ligand>
</feature>
<feature type="binding site" evidence="1">
    <location>
        <position position="101"/>
    </location>
    <ligand>
        <name>Fe cation</name>
        <dbReference type="ChEBI" id="CHEBI:24875"/>
        <label>2</label>
    </ligand>
</feature>
<feature type="binding site" evidence="3">
    <location>
        <position position="104"/>
    </location>
    <ligand>
        <name>Fe cation</name>
        <dbReference type="ChEBI" id="CHEBI:24875"/>
        <label>1</label>
    </ligand>
</feature>
<feature type="binding site" evidence="1">
    <location>
        <position position="163"/>
    </location>
    <ligand>
        <name>Fe cation</name>
        <dbReference type="ChEBI" id="CHEBI:24875"/>
        <label>2</label>
    </ligand>
</feature>
<feature type="binding site" evidence="1">
    <location>
        <position position="197"/>
    </location>
    <ligand>
        <name>Fe cation</name>
        <dbReference type="ChEBI" id="CHEBI:24875"/>
        <label>2</label>
    </ligand>
</feature>
<feature type="binding site" evidence="1">
    <location>
        <position position="200"/>
    </location>
    <ligand>
        <name>Fe cation</name>
        <dbReference type="ChEBI" id="CHEBI:24875"/>
        <label>2</label>
    </ligand>
</feature>
<protein>
    <recommendedName>
        <fullName>Ribonucleoside-diphosphate reductase small chain</fullName>
        <ecNumber>1.17.4.1</ecNumber>
    </recommendedName>
    <alternativeName>
        <fullName>Ribonucleotide reductase small subunit</fullName>
    </alternativeName>
    <alternativeName>
        <fullName>Ribonucleotide reductase subunit 2</fullName>
        <shortName>RNR2</shortName>
    </alternativeName>
</protein>
<sequence>MEPILAKNPNRFVIFPIQYHDIWNMYKKAEASFWTVEEVDISKDINDWNKLTPDEKYFIKHVLAFFAASDGIVNENLAERFCIEVQITEARCFYGFQMAIENIHSEMYSLLIDTYVKDSNEKNYLFNAIETMPCVKKKADWAQKWIHDSAGYGERLIAFAAVEGIFFSGSFASIFWLKKRGLMPGLTFSNELISRDEGLHCDFACLMFKHLLYPPSEETVRSIITDAVSIEQEFLTVALPVKLIGMNCEMMKTYMEFVADRLISELGFKRIYNVTNPSDFMENISLEGKTNFFEKRVGEYQKMGVMSQEDNHFSLDVDF</sequence>
<dbReference type="EC" id="1.17.4.1"/>
<dbReference type="EMBL" id="X69198">
    <property type="protein sequence ID" value="CAA48969.1"/>
    <property type="status" value="ALT_INIT"/>
    <property type="molecule type" value="Genomic_DNA"/>
</dbReference>
<dbReference type="PIR" id="H36839">
    <property type="entry name" value="H36839"/>
</dbReference>
<dbReference type="RefSeq" id="NP_042072.2">
    <property type="nucleotide sequence ID" value="NC_001611.1"/>
</dbReference>
<dbReference type="SMR" id="P0DSS7"/>
<dbReference type="GeneID" id="1486388"/>
<dbReference type="KEGG" id="vg:1486388"/>
<dbReference type="Proteomes" id="UP000002060">
    <property type="component" value="Segment"/>
</dbReference>
<dbReference type="GO" id="GO:0046872">
    <property type="term" value="F:metal ion binding"/>
    <property type="evidence" value="ECO:0007669"/>
    <property type="project" value="UniProtKB-KW"/>
</dbReference>
<dbReference type="GO" id="GO:0004748">
    <property type="term" value="F:ribonucleoside-diphosphate reductase activity, thioredoxin disulfide as acceptor"/>
    <property type="evidence" value="ECO:0007669"/>
    <property type="project" value="UniProtKB-EC"/>
</dbReference>
<dbReference type="GO" id="GO:0009263">
    <property type="term" value="P:deoxyribonucleotide biosynthetic process"/>
    <property type="evidence" value="ECO:0007669"/>
    <property type="project" value="UniProtKB-KW"/>
</dbReference>
<dbReference type="CDD" id="cd01049">
    <property type="entry name" value="RNRR2"/>
    <property type="match status" value="1"/>
</dbReference>
<dbReference type="FunFam" id="1.10.620.20:FF:000004">
    <property type="entry name" value="Ribonucleoside-diphosphate reductase subunit M2 B"/>
    <property type="match status" value="1"/>
</dbReference>
<dbReference type="Gene3D" id="1.10.620.20">
    <property type="entry name" value="Ribonucleotide Reductase, subunit A"/>
    <property type="match status" value="1"/>
</dbReference>
<dbReference type="InterPro" id="IPR009078">
    <property type="entry name" value="Ferritin-like_SF"/>
</dbReference>
<dbReference type="InterPro" id="IPR012348">
    <property type="entry name" value="RNR-like"/>
</dbReference>
<dbReference type="InterPro" id="IPR033909">
    <property type="entry name" value="RNR_small"/>
</dbReference>
<dbReference type="InterPro" id="IPR030475">
    <property type="entry name" value="RNR_small_AS"/>
</dbReference>
<dbReference type="InterPro" id="IPR000358">
    <property type="entry name" value="RNR_small_fam"/>
</dbReference>
<dbReference type="PANTHER" id="PTHR23409">
    <property type="entry name" value="RIBONUCLEOSIDE-DIPHOSPHATE REDUCTASE SMALL CHAIN"/>
    <property type="match status" value="1"/>
</dbReference>
<dbReference type="PANTHER" id="PTHR23409:SF18">
    <property type="entry name" value="RIBONUCLEOSIDE-DIPHOSPHATE REDUCTASE SUBUNIT M2"/>
    <property type="match status" value="1"/>
</dbReference>
<dbReference type="Pfam" id="PF00268">
    <property type="entry name" value="Ribonuc_red_sm"/>
    <property type="match status" value="1"/>
</dbReference>
<dbReference type="SUPFAM" id="SSF47240">
    <property type="entry name" value="Ferritin-like"/>
    <property type="match status" value="1"/>
</dbReference>
<dbReference type="PROSITE" id="PS00368">
    <property type="entry name" value="RIBORED_SMALL"/>
    <property type="match status" value="1"/>
</dbReference>
<proteinExistence type="evidence at transcript level"/>
<evidence type="ECO:0000250" key="1"/>
<evidence type="ECO:0000250" key="2">
    <source>
        <dbReference type="UniProtKB" id="P11158"/>
    </source>
</evidence>
<evidence type="ECO:0000255" key="3">
    <source>
        <dbReference type="PROSITE-ProRule" id="PRU10014"/>
    </source>
</evidence>
<evidence type="ECO:0000305" key="4"/>
<gene>
    <name type="primary">OPG048</name>
    <name type="ORF">C8L</name>
    <name type="ORF">F4L</name>
</gene>
<keyword id="KW-0215">Deoxyribonucleotide synthesis</keyword>
<keyword id="KW-0244">Early protein</keyword>
<keyword id="KW-0408">Iron</keyword>
<keyword id="KW-0479">Metal-binding</keyword>
<keyword id="KW-0560">Oxidoreductase</keyword>
<keyword id="KW-1185">Reference proteome</keyword>
<reference key="1">
    <citation type="journal article" date="1993" name="Virus Res.">
        <title>Analysis of the nucleotide sequence of a 43 kbp segment of the genome of variola virus India-1967 strain.</title>
        <authorList>
            <person name="Shchelkunov S.N."/>
            <person name="Blinov V.M."/>
            <person name="Resenchuk S.M."/>
            <person name="Totmenin A.V."/>
            <person name="Sandakhchiev L.S."/>
        </authorList>
    </citation>
    <scope>NUCLEOTIDE SEQUENCE [GENOMIC DNA]</scope>
</reference>
<reference key="2">
    <citation type="journal article" date="1993" name="FEBS Lett.">
        <title>Genes of variola and vaccinia viruses necessary to overcome the host protective mechanisms.</title>
        <authorList>
            <person name="Shchelkunov S.N."/>
            <person name="Blinov V.M."/>
            <person name="Sandakhchiev L.S."/>
        </authorList>
    </citation>
    <scope>NUCLEOTIDE SEQUENCE [GENOMIC DNA]</scope>
</reference>
<comment type="function">
    <text evidence="2">Ribonucleoside-diphosphate reductase holoenzyme provides the precursors necessary for viral DNA synthesis. Allows virus growth in non-dividing cells. Catalyzes the biosynthesis of deoxyribonucleotides from the corresponding ribonucleotides.</text>
</comment>
<comment type="catalytic activity">
    <reaction evidence="3">
        <text>a 2'-deoxyribonucleoside 5'-diphosphate + [thioredoxin]-disulfide + H2O = a ribonucleoside 5'-diphosphate + [thioredoxin]-dithiol</text>
        <dbReference type="Rhea" id="RHEA:23252"/>
        <dbReference type="Rhea" id="RHEA-COMP:10698"/>
        <dbReference type="Rhea" id="RHEA-COMP:10700"/>
        <dbReference type="ChEBI" id="CHEBI:15377"/>
        <dbReference type="ChEBI" id="CHEBI:29950"/>
        <dbReference type="ChEBI" id="CHEBI:50058"/>
        <dbReference type="ChEBI" id="CHEBI:57930"/>
        <dbReference type="ChEBI" id="CHEBI:73316"/>
        <dbReference type="EC" id="1.17.4.1"/>
    </reaction>
</comment>
<comment type="cofactor">
    <cofactor evidence="1">
        <name>Fe cation</name>
        <dbReference type="ChEBI" id="CHEBI:24875"/>
    </cofactor>
    <text evidence="1">Binds 2 iron ions per subunit.</text>
</comment>
<comment type="subunit">
    <text evidence="2">Interacts with RNR1/OPG080 subunit. Can interact with host RNR1 supunit.</text>
</comment>
<comment type="induction">
    <text>Expressed early in the viral replicative cycle.</text>
</comment>
<comment type="similarity">
    <text evidence="4">Belongs to the ribonucleoside diphosphate reductase small chain family.</text>
</comment>
<comment type="sequence caution" evidence="4">
    <conflict type="erroneous initiation">
        <sequence resource="EMBL-CDS" id="CAA48969"/>
    </conflict>
    <text>Extended N-terminus.</text>
</comment>
<accession>P0DSS7</accession>
<accession>P33799</accession>
<name>RIR2_VAR67</name>
<organism>
    <name type="scientific">Variola virus (isolate Human/India/Ind3/1967)</name>
    <name type="common">VARV</name>
    <name type="synonym">Smallpox virus</name>
    <dbReference type="NCBI Taxonomy" id="587200"/>
    <lineage>
        <taxon>Viruses</taxon>
        <taxon>Varidnaviria</taxon>
        <taxon>Bamfordvirae</taxon>
        <taxon>Nucleocytoviricota</taxon>
        <taxon>Pokkesviricetes</taxon>
        <taxon>Chitovirales</taxon>
        <taxon>Poxviridae</taxon>
        <taxon>Chordopoxvirinae</taxon>
        <taxon>Orthopoxvirus</taxon>
        <taxon>Variola virus</taxon>
    </lineage>
</organism>